<organism>
    <name type="scientific">Sus scrofa</name>
    <name type="common">Pig</name>
    <dbReference type="NCBI Taxonomy" id="9823"/>
    <lineage>
        <taxon>Eukaryota</taxon>
        <taxon>Metazoa</taxon>
        <taxon>Chordata</taxon>
        <taxon>Craniata</taxon>
        <taxon>Vertebrata</taxon>
        <taxon>Euteleostomi</taxon>
        <taxon>Mammalia</taxon>
        <taxon>Eutheria</taxon>
        <taxon>Laurasiatheria</taxon>
        <taxon>Artiodactyla</taxon>
        <taxon>Suina</taxon>
        <taxon>Suidae</taxon>
        <taxon>Sus</taxon>
    </lineage>
</organism>
<name>DESM_PIG</name>
<comment type="function">
    <text evidence="2 3">Muscle-specific type III intermediate filament essential for proper muscular structure and function. Plays a crucial role in maintaining the structure of sarcomeres, inter-connecting the Z-disks and forming the myofibrils, linking them not only to the sarcolemmal cytoskeleton, but also to the nucleus and mitochondria, thus providing strength for the muscle fiber during activity. In adult striated muscle they form a fibrous network connecting myofibrils to each other and to the plasma membrane from the periphery of the Z-line structures. May act as a sarcomeric microtubule-anchoring protein: specifically associates with detyrosinated tubulin-alpha chains, leading to buckled microtubules and mechanical resistance to contraction. Required for nuclear membrane integrity, via anchoring at the cell tip and nuclear envelope, resulting in maintenance of microtubule-derived intracellular mechanical forces (By similarity). Contributes to the transcriptional regulation of the NKX2-5 gene in cardiac progenitor cells during a short period of cardiomyogenesis and in cardiac side population stem cells in the adult. Plays a role in maintaining an optimal conformation of nebulette (NEB) on heart muscle sarcomeres to bind and recruit cardiac alpha-actin.</text>
</comment>
<comment type="subunit">
    <text evidence="2 3">Homomer. Interacts with DST. Interacts with MTM1. Interacts with EPPK1; interaction is dependent of higher-order structure of intermediate filament. Interacts with CRYAB. Interacts with NEB (via nebulin repeats 160-164). Interacts (via rod region) with NEBL (via nebulin repeats 1-5). Interacts with ASB2; the interaction targets DES for proteasomal degradation (By similarity). Interacts with PKP1 (By similarity). Interacts with FLII (By similarity).</text>
</comment>
<comment type="subcellular location">
    <subcellularLocation>
        <location evidence="2">Cytoplasm</location>
        <location evidence="2">Myofibril</location>
        <location evidence="2">Sarcomere</location>
        <location evidence="2">Z line</location>
    </subcellularLocation>
    <subcellularLocation>
        <location evidence="2">Cytoplasm</location>
    </subcellularLocation>
    <subcellularLocation>
        <location evidence="2">Cell membrane</location>
        <location evidence="2">Sarcolemma</location>
    </subcellularLocation>
    <subcellularLocation>
        <location evidence="3">Nucleus</location>
    </subcellularLocation>
    <subcellularLocation>
        <location evidence="3">Cell tip</location>
    </subcellularLocation>
    <subcellularLocation>
        <location evidence="3">Nucleus envelope</location>
    </subcellularLocation>
    <text evidence="2 3">Localizes in the intercalated disks which occur at the Z line of cardiomyocytes. Localizes in the nucleus exclusively in differentiating cardiac progenitor cells and premature cardiomyocytes. PKP2 is required for correct anchoring of DES at the cell tip and nuclear envelope (By similarity).</text>
</comment>
<comment type="PTM">
    <text evidence="4">ADP-ribosylation prevents ability to form intermediate filaments.</text>
</comment>
<comment type="PTM">
    <text evidence="3">Phosphorylation at Ser-7, Ser-28 and Ser-32 by CDK1 and phosphorylation at Ser-60 by AURKB contribute to efficient separation of desmin intermediate filaments during mitosis.</text>
</comment>
<comment type="PTM">
    <text evidence="3">Ubiquitination by a SCF-like complex containing ASB2 leads to proteasomal degradation.</text>
</comment>
<comment type="similarity">
    <text evidence="5">Belongs to the intermediate filament family.</text>
</comment>
<proteinExistence type="evidence at protein level"/>
<feature type="initiator methionine" description="Removed" evidence="1">
    <location>
        <position position="1"/>
    </location>
</feature>
<feature type="chain" id="PRO_0000063774" description="Desmin">
    <location>
        <begin position="2"/>
        <end position="471"/>
    </location>
</feature>
<feature type="domain" description="IF rod" evidence="5">
    <location>
        <begin position="109"/>
        <end position="417"/>
    </location>
</feature>
<feature type="region of interest" description="Head">
    <location>
        <begin position="2"/>
        <end position="109"/>
    </location>
</feature>
<feature type="region of interest" description="Coil 1A">
    <location>
        <begin position="110"/>
        <end position="142"/>
    </location>
</feature>
<feature type="region of interest" description="Linker 1">
    <location>
        <begin position="143"/>
        <end position="152"/>
    </location>
</feature>
<feature type="region of interest" description="Coil 1B">
    <location>
        <begin position="153"/>
        <end position="253"/>
    </location>
</feature>
<feature type="region of interest" description="Linker 12">
    <location>
        <begin position="254"/>
        <end position="269"/>
    </location>
</feature>
<feature type="region of interest" description="Interaction with NEB" evidence="2">
    <location>
        <begin position="269"/>
        <end position="416"/>
    </location>
</feature>
<feature type="region of interest" description="Coil 2A">
    <location>
        <begin position="270"/>
        <end position="288"/>
    </location>
</feature>
<feature type="region of interest" description="Linker 2">
    <location>
        <begin position="289"/>
        <end position="296"/>
    </location>
</feature>
<feature type="region of interest" description="Coil 2B">
    <location>
        <begin position="297"/>
        <end position="413"/>
    </location>
</feature>
<feature type="region of interest" description="Tail">
    <location>
        <begin position="414"/>
        <end position="471"/>
    </location>
</feature>
<feature type="region of interest" description="Interaction with CRYAB" evidence="2">
    <location>
        <begin position="439"/>
        <end position="454"/>
    </location>
</feature>
<feature type="site" description="Stutter">
    <location>
        <position position="355"/>
    </location>
</feature>
<feature type="modified residue" description="Phosphoserine; by CDK1" evidence="3">
    <location>
        <position position="7"/>
    </location>
</feature>
<feature type="modified residue" description="Phosphoserine; by AURKB" evidence="2">
    <location>
        <position position="12"/>
    </location>
</feature>
<feature type="modified residue" description="Omega-N-methylarginine" evidence="3">
    <location>
        <position position="16"/>
    </location>
</feature>
<feature type="modified residue" description="Phosphothreonine; by AURKB and ROCK1" evidence="2">
    <location>
        <position position="17"/>
    </location>
</feature>
<feature type="modified residue" description="Phosphoserine; by CDK1" evidence="2">
    <location>
        <position position="28"/>
    </location>
</feature>
<feature type="modified residue" description="Phosphoserine" evidence="3">
    <location>
        <position position="31"/>
    </location>
</feature>
<feature type="modified residue" description="Phosphoserine; by CDK1" evidence="2">
    <location>
        <position position="32"/>
    </location>
</feature>
<feature type="modified residue" description="Asymmetric dimethylarginine; alternate" evidence="3">
    <location>
        <position position="37"/>
    </location>
</feature>
<feature type="modified residue" description="Omega-N-methylarginine; alternate" evidence="3">
    <location>
        <position position="37"/>
    </location>
</feature>
<feature type="modified residue" description="Phosphoserine" evidence="4">
    <location>
        <position position="45"/>
    </location>
</feature>
<feature type="modified residue" description="ADP-ribosylarginine" evidence="4">
    <location>
        <position position="58"/>
    </location>
</feature>
<feature type="modified residue" description="Phosphoserine; by AURKB" evidence="2">
    <location>
        <position position="60"/>
    </location>
</feature>
<feature type="modified residue" description="Omega-N-methylarginine" evidence="3">
    <location>
        <position position="70"/>
    </location>
</feature>
<feature type="modified residue" description="Phosphothreonine; by ROCK1" evidence="2">
    <location>
        <position position="77"/>
    </location>
</feature>
<feature type="modified residue" description="Phosphoserine" evidence="4">
    <location>
        <position position="81"/>
    </location>
</feature>
<feature type="modified residue" description="Phosphoserine" evidence="4">
    <location>
        <position position="291"/>
    </location>
</feature>
<feature type="modified residue" description="Phosphoserine" evidence="4">
    <location>
        <position position="359"/>
    </location>
</feature>
<feature type="modified residue" description="Phosphoserine" evidence="4">
    <location>
        <position position="362"/>
    </location>
</feature>
<feature type="modified residue" description="Phosphoserine" evidence="3">
    <location>
        <position position="425"/>
    </location>
</feature>
<reference key="1">
    <citation type="submission" date="1998-03" db="EMBL/GenBank/DDBJ databases">
        <title>Desmin structure as related to meat tenderness.</title>
        <authorList>
            <person name="Chikuni K."/>
            <person name="Tanabe R."/>
            <person name="Muroya S."/>
        </authorList>
    </citation>
    <scope>NUCLEOTIDE SEQUENCE [GENOMIC DNA / MRNA]</scope>
    <source>
        <tissue>Muscle</tissue>
    </source>
</reference>
<reference key="2">
    <citation type="submission" date="1999-03" db="EMBL/GenBank/DDBJ databases">
        <title>Muscle ESTs II: cloning, sequencing and mapping the pig gene for the intermediate filament protein desmin (DES).</title>
        <authorList>
            <person name="Tuggle C.K."/>
            <person name="Sanchez-Serrano I."/>
            <person name="Smith B."/>
            <person name="Marklund L."/>
            <person name="Ernst C."/>
        </authorList>
    </citation>
    <scope>NUCLEOTIDE SEQUENCE [MRNA]</scope>
</reference>
<reference key="3">
    <citation type="submission" date="2001-03" db="EMBL/GenBank/DDBJ databases">
        <title>A polymorphic CT-repeat at the porcine desmin locus with an effect on meat quality.</title>
        <authorList>
            <person name="Beuzen N.D."/>
            <person name="Hall A.D."/>
            <person name="Gallagher A."/>
            <person name="Chang K.-C."/>
        </authorList>
    </citation>
    <scope>NUCLEOTIDE SEQUENCE [MRNA]</scope>
    <source>
        <tissue>Longissimus muscle</tissue>
    </source>
</reference>
<reference key="4">
    <citation type="journal article" date="1981" name="Proc. Natl. Acad. Sci. U.S.A.">
        <title>Comparison of the proteins of two immunologically distinct intermediate-sized filaments by amino acid sequence analysis: desmin and vimentin.</title>
        <authorList>
            <person name="Geisler N."/>
            <person name="Weber K."/>
        </authorList>
    </citation>
    <scope>PROTEIN SEQUENCE OF 334-471</scope>
</reference>
<evidence type="ECO:0000250" key="1">
    <source>
        <dbReference type="UniProtKB" id="P02542"/>
    </source>
</evidence>
<evidence type="ECO:0000250" key="2">
    <source>
        <dbReference type="UniProtKB" id="P17661"/>
    </source>
</evidence>
<evidence type="ECO:0000250" key="3">
    <source>
        <dbReference type="UniProtKB" id="P31001"/>
    </source>
</evidence>
<evidence type="ECO:0000250" key="4">
    <source>
        <dbReference type="UniProtKB" id="P48675"/>
    </source>
</evidence>
<evidence type="ECO:0000255" key="5">
    <source>
        <dbReference type="PROSITE-ProRule" id="PRU01188"/>
    </source>
</evidence>
<protein>
    <recommendedName>
        <fullName>Desmin</fullName>
    </recommendedName>
</protein>
<keyword id="KW-0013">ADP-ribosylation</keyword>
<keyword id="KW-1003">Cell membrane</keyword>
<keyword id="KW-0175">Coiled coil</keyword>
<keyword id="KW-0963">Cytoplasm</keyword>
<keyword id="KW-0903">Direct protein sequencing</keyword>
<keyword id="KW-0403">Intermediate filament</keyword>
<keyword id="KW-0472">Membrane</keyword>
<keyword id="KW-0488">Methylation</keyword>
<keyword id="KW-0514">Muscle protein</keyword>
<keyword id="KW-0539">Nucleus</keyword>
<keyword id="KW-0597">Phosphoprotein</keyword>
<keyword id="KW-1185">Reference proteome</keyword>
<keyword id="KW-0832">Ubl conjugation</keyword>
<sequence length="471" mass="53629">MSQAYSSSQRVSSYRRTFGGAPSFPLGSPLSSPVFPRAGFGTKGSSSSVTSRVYQVSRTSGGAGGLGPLRASRLGATRVPSSSYGAGELLDFSLADAVNQEFLTTRTNEKVELQELNDRFANYIEKVRFLEQQNAALAAEVNRLKGREPTRVAEIYEEELRELRRQVEVLTNQRARVDVERDNLLDDLQRLKAKLQEEIQLKEEAENNLAAFRADVDAATLARIDLERRIESLNEEIAFLKKVHEEEIRELQAQLQEQQVQVEMDMSKPDLTAALRDIRAQYETIAAKNISEAEEWYKSKVSDLTQAANKNNDALRQAKQEMMEYRHQIQSYTCEIDALKGTNDSLMRQMRELEDRFASEASGYQDNIARLEEEIRHLKDEMARHLREYQDLLNVKMALDVEIATYRKLLEGEESRINLPIQTFSALNFRETSPEQRGSEVHTKKTVMIKTIETRDGEVVSEATQQQHEVL</sequence>
<accession>P02540</accession>
<accession>O62656</accession>
<dbReference type="EMBL" id="AB011676">
    <property type="protein sequence ID" value="BAA25136.1"/>
    <property type="molecule type" value="Genomic_DNA"/>
</dbReference>
<dbReference type="EMBL" id="AB011674">
    <property type="protein sequence ID" value="BAA25134.1"/>
    <property type="molecule type" value="mRNA"/>
</dbReference>
<dbReference type="EMBL" id="AF136188">
    <property type="protein sequence ID" value="AAD46492.1"/>
    <property type="molecule type" value="mRNA"/>
</dbReference>
<dbReference type="EMBL" id="AF363284">
    <property type="protein sequence ID" value="AAK51087.1"/>
    <property type="molecule type" value="mRNA"/>
</dbReference>
<dbReference type="PIR" id="A02955">
    <property type="entry name" value="DMPG"/>
</dbReference>
<dbReference type="RefSeq" id="NP_001001535.1">
    <property type="nucleotide sequence ID" value="NM_001001535.1"/>
</dbReference>
<dbReference type="SMR" id="P02540"/>
<dbReference type="FunCoup" id="P02540">
    <property type="interactions" value="1390"/>
</dbReference>
<dbReference type="STRING" id="9823.ENSSSCP00000059483"/>
<dbReference type="PaxDb" id="9823-ENSSSCP00000021504"/>
<dbReference type="PeptideAtlas" id="P02540"/>
<dbReference type="Ensembl" id="ENSSSCT00000030104.4">
    <property type="protein sequence ID" value="ENSSSCP00000021504.1"/>
    <property type="gene ID" value="ENSSSCG00000020785.4"/>
</dbReference>
<dbReference type="Ensembl" id="ENSSSCT00015045488.1">
    <property type="protein sequence ID" value="ENSSSCP00015018025.1"/>
    <property type="gene ID" value="ENSSSCG00015032038.1"/>
</dbReference>
<dbReference type="Ensembl" id="ENSSSCT00025019257.1">
    <property type="protein sequence ID" value="ENSSSCP00025007801.1"/>
    <property type="gene ID" value="ENSSSCG00025014279.1"/>
</dbReference>
<dbReference type="Ensembl" id="ENSSSCT00030014460.1">
    <property type="protein sequence ID" value="ENSSSCP00030006492.1"/>
    <property type="gene ID" value="ENSSSCG00030010480.1"/>
</dbReference>
<dbReference type="Ensembl" id="ENSSSCT00035020132.1">
    <property type="protein sequence ID" value="ENSSSCP00035007213.1"/>
    <property type="gene ID" value="ENSSSCG00035015748.1"/>
</dbReference>
<dbReference type="Ensembl" id="ENSSSCT00040026345.1">
    <property type="protein sequence ID" value="ENSSSCP00040011142.1"/>
    <property type="gene ID" value="ENSSSCG00040019479.1"/>
</dbReference>
<dbReference type="Ensembl" id="ENSSSCT00045066391.1">
    <property type="protein sequence ID" value="ENSSSCP00045047089.1"/>
    <property type="gene ID" value="ENSSSCG00045038283.1"/>
</dbReference>
<dbReference type="Ensembl" id="ENSSSCT00050055578.1">
    <property type="protein sequence ID" value="ENSSSCP00050023578.1"/>
    <property type="gene ID" value="ENSSSCG00050040989.1"/>
</dbReference>
<dbReference type="Ensembl" id="ENSSSCT00055005105.1">
    <property type="protein sequence ID" value="ENSSSCP00055003947.1"/>
    <property type="gene ID" value="ENSSSCG00055002623.1"/>
</dbReference>
<dbReference type="Ensembl" id="ENSSSCT00060064376.1">
    <property type="protein sequence ID" value="ENSSSCP00060027594.1"/>
    <property type="gene ID" value="ENSSSCG00060047403.1"/>
</dbReference>
<dbReference type="Ensembl" id="ENSSSCT00065046861.1">
    <property type="protein sequence ID" value="ENSSSCP00065020150.1"/>
    <property type="gene ID" value="ENSSSCG00065034406.1"/>
</dbReference>
<dbReference type="Ensembl" id="ENSSSCT00070031867.1">
    <property type="protein sequence ID" value="ENSSSCP00070026567.1"/>
    <property type="gene ID" value="ENSSSCG00070016194.1"/>
</dbReference>
<dbReference type="Ensembl" id="ENSSSCT00085012507">
    <property type="protein sequence ID" value="ENSSSCP00085009124"/>
    <property type="gene ID" value="ENSSSCG00085006592"/>
</dbReference>
<dbReference type="Ensembl" id="ENSSSCT00090050455">
    <property type="protein sequence ID" value="ENSSSCP00090031434"/>
    <property type="gene ID" value="ENSSSCG00090028503"/>
</dbReference>
<dbReference type="Ensembl" id="ENSSSCT00105072577">
    <property type="protein sequence ID" value="ENSSSCP00105051507"/>
    <property type="gene ID" value="ENSSSCG00105037972"/>
</dbReference>
<dbReference type="Ensembl" id="ENSSSCT00110007697">
    <property type="protein sequence ID" value="ENSSSCP00110005463"/>
    <property type="gene ID" value="ENSSSCG00110003959"/>
</dbReference>
<dbReference type="Ensembl" id="ENSSSCT00115000437">
    <property type="protein sequence ID" value="ENSSSCP00115000385"/>
    <property type="gene ID" value="ENSSSCG00115000325"/>
</dbReference>
<dbReference type="Ensembl" id="ENSSSCT00130057440">
    <property type="protein sequence ID" value="ENSSSCP00130041163"/>
    <property type="gene ID" value="ENSSSCG00130029393"/>
</dbReference>
<dbReference type="GeneID" id="396725"/>
<dbReference type="KEGG" id="ssc:396725"/>
<dbReference type="CTD" id="1674"/>
<dbReference type="VGNC" id="VGNC:96159">
    <property type="gene designation" value="DES"/>
</dbReference>
<dbReference type="eggNOG" id="KOG0977">
    <property type="taxonomic scope" value="Eukaryota"/>
</dbReference>
<dbReference type="GeneTree" id="ENSGT00940000155522"/>
<dbReference type="HOGENOM" id="CLU_012560_7_4_1"/>
<dbReference type="InParanoid" id="P02540"/>
<dbReference type="OMA" id="DMEERHG"/>
<dbReference type="OrthoDB" id="2441647at2759"/>
<dbReference type="TreeFam" id="TF330122"/>
<dbReference type="Reactome" id="R-SSC-390522">
    <property type="pathway name" value="Striated Muscle Contraction"/>
</dbReference>
<dbReference type="Proteomes" id="UP000008227">
    <property type="component" value="Chromosome 15"/>
</dbReference>
<dbReference type="Proteomes" id="UP000314985">
    <property type="component" value="Chromosome 15"/>
</dbReference>
<dbReference type="Proteomes" id="UP000694570">
    <property type="component" value="Unplaced"/>
</dbReference>
<dbReference type="Proteomes" id="UP000694571">
    <property type="component" value="Unplaced"/>
</dbReference>
<dbReference type="Proteomes" id="UP000694720">
    <property type="component" value="Unplaced"/>
</dbReference>
<dbReference type="Proteomes" id="UP000694722">
    <property type="component" value="Unplaced"/>
</dbReference>
<dbReference type="Proteomes" id="UP000694723">
    <property type="component" value="Unplaced"/>
</dbReference>
<dbReference type="Proteomes" id="UP000694724">
    <property type="component" value="Unplaced"/>
</dbReference>
<dbReference type="Proteomes" id="UP000694725">
    <property type="component" value="Unplaced"/>
</dbReference>
<dbReference type="Proteomes" id="UP000694726">
    <property type="component" value="Unplaced"/>
</dbReference>
<dbReference type="Proteomes" id="UP000694727">
    <property type="component" value="Unplaced"/>
</dbReference>
<dbReference type="Proteomes" id="UP000694728">
    <property type="component" value="Unplaced"/>
</dbReference>
<dbReference type="Bgee" id="ENSSSCG00000020785">
    <property type="expression patterns" value="Expressed in psoas major muscle and 36 other cell types or tissues"/>
</dbReference>
<dbReference type="ExpressionAtlas" id="P02540">
    <property type="expression patterns" value="baseline and differential"/>
</dbReference>
<dbReference type="GO" id="GO:0097512">
    <property type="term" value="C:cardiac myofibril"/>
    <property type="evidence" value="ECO:0007669"/>
    <property type="project" value="Ensembl"/>
</dbReference>
<dbReference type="GO" id="GO:0051286">
    <property type="term" value="C:cell tip"/>
    <property type="evidence" value="ECO:0000250"/>
    <property type="project" value="UniProtKB"/>
</dbReference>
<dbReference type="GO" id="GO:0005911">
    <property type="term" value="C:cell-cell junction"/>
    <property type="evidence" value="ECO:0000318"/>
    <property type="project" value="GO_Central"/>
</dbReference>
<dbReference type="GO" id="GO:0005737">
    <property type="term" value="C:cytoplasm"/>
    <property type="evidence" value="ECO:0000250"/>
    <property type="project" value="UniProtKB"/>
</dbReference>
<dbReference type="GO" id="GO:0005916">
    <property type="term" value="C:fascia adherens"/>
    <property type="evidence" value="ECO:0007669"/>
    <property type="project" value="Ensembl"/>
</dbReference>
<dbReference type="GO" id="GO:0014704">
    <property type="term" value="C:intercalated disc"/>
    <property type="evidence" value="ECO:0000250"/>
    <property type="project" value="UniProtKB"/>
</dbReference>
<dbReference type="GO" id="GO:0005882">
    <property type="term" value="C:intermediate filament"/>
    <property type="evidence" value="ECO:0000318"/>
    <property type="project" value="GO_Central"/>
</dbReference>
<dbReference type="GO" id="GO:0031594">
    <property type="term" value="C:neuromuscular junction"/>
    <property type="evidence" value="ECO:0007669"/>
    <property type="project" value="Ensembl"/>
</dbReference>
<dbReference type="GO" id="GO:0005635">
    <property type="term" value="C:nuclear envelope"/>
    <property type="evidence" value="ECO:0000250"/>
    <property type="project" value="UniProtKB"/>
</dbReference>
<dbReference type="GO" id="GO:0005634">
    <property type="term" value="C:nucleus"/>
    <property type="evidence" value="ECO:0000250"/>
    <property type="project" value="UniProtKB"/>
</dbReference>
<dbReference type="GO" id="GO:0042383">
    <property type="term" value="C:sarcolemma"/>
    <property type="evidence" value="ECO:0000250"/>
    <property type="project" value="UniProtKB"/>
</dbReference>
<dbReference type="GO" id="GO:0030018">
    <property type="term" value="C:Z disc"/>
    <property type="evidence" value="ECO:0000250"/>
    <property type="project" value="UniProtKB"/>
</dbReference>
<dbReference type="GO" id="GO:0008092">
    <property type="term" value="F:cytoskeletal protein binding"/>
    <property type="evidence" value="ECO:0007669"/>
    <property type="project" value="Ensembl"/>
</dbReference>
<dbReference type="GO" id="GO:0042802">
    <property type="term" value="F:identical protein binding"/>
    <property type="evidence" value="ECO:0007669"/>
    <property type="project" value="Ensembl"/>
</dbReference>
<dbReference type="GO" id="GO:0005200">
    <property type="term" value="F:structural constituent of cytoskeleton"/>
    <property type="evidence" value="ECO:0000318"/>
    <property type="project" value="GO_Central"/>
</dbReference>
<dbReference type="GO" id="GO:0045109">
    <property type="term" value="P:intermediate filament organization"/>
    <property type="evidence" value="ECO:0000250"/>
    <property type="project" value="UniProtKB"/>
</dbReference>
<dbReference type="GO" id="GO:0006998">
    <property type="term" value="P:nuclear envelope organization"/>
    <property type="evidence" value="ECO:0000250"/>
    <property type="project" value="UniProtKB"/>
</dbReference>
<dbReference type="GO" id="GO:0060538">
    <property type="term" value="P:skeletal muscle organ development"/>
    <property type="evidence" value="ECO:0000318"/>
    <property type="project" value="GO_Central"/>
</dbReference>
<dbReference type="FunFam" id="1.20.5.1160:FF:000001">
    <property type="entry name" value="Keratin type II"/>
    <property type="match status" value="1"/>
</dbReference>
<dbReference type="FunFam" id="1.20.5.170:FF:000002">
    <property type="entry name" value="Type I keratin KA11"/>
    <property type="match status" value="1"/>
</dbReference>
<dbReference type="FunFam" id="1.20.5.500:FF:000001">
    <property type="entry name" value="Type II keratin 23"/>
    <property type="match status" value="1"/>
</dbReference>
<dbReference type="Gene3D" id="1.20.5.170">
    <property type="match status" value="1"/>
</dbReference>
<dbReference type="Gene3D" id="1.20.5.500">
    <property type="entry name" value="Single helix bin"/>
    <property type="match status" value="1"/>
</dbReference>
<dbReference type="Gene3D" id="1.20.5.1160">
    <property type="entry name" value="Vasodilator-stimulated phosphoprotein"/>
    <property type="match status" value="1"/>
</dbReference>
<dbReference type="InterPro" id="IPR018039">
    <property type="entry name" value="IF_conserved"/>
</dbReference>
<dbReference type="InterPro" id="IPR039008">
    <property type="entry name" value="IF_rod_dom"/>
</dbReference>
<dbReference type="InterPro" id="IPR006821">
    <property type="entry name" value="Intermed_filament_DNA-bd"/>
</dbReference>
<dbReference type="InterPro" id="IPR050405">
    <property type="entry name" value="Intermediate_filament"/>
</dbReference>
<dbReference type="PANTHER" id="PTHR45652:SF2">
    <property type="entry name" value="DESMIN"/>
    <property type="match status" value="1"/>
</dbReference>
<dbReference type="PANTHER" id="PTHR45652">
    <property type="entry name" value="GLIAL FIBRILLARY ACIDIC PROTEIN"/>
    <property type="match status" value="1"/>
</dbReference>
<dbReference type="Pfam" id="PF00038">
    <property type="entry name" value="Filament"/>
    <property type="match status" value="1"/>
</dbReference>
<dbReference type="Pfam" id="PF04732">
    <property type="entry name" value="Filament_head"/>
    <property type="match status" value="1"/>
</dbReference>
<dbReference type="SMART" id="SM01391">
    <property type="entry name" value="Filament"/>
    <property type="match status" value="1"/>
</dbReference>
<dbReference type="SUPFAM" id="SSF64593">
    <property type="entry name" value="Intermediate filament protein, coiled coil region"/>
    <property type="match status" value="2"/>
</dbReference>
<dbReference type="PROSITE" id="PS00226">
    <property type="entry name" value="IF_ROD_1"/>
    <property type="match status" value="1"/>
</dbReference>
<dbReference type="PROSITE" id="PS51842">
    <property type="entry name" value="IF_ROD_2"/>
    <property type="match status" value="1"/>
</dbReference>
<gene>
    <name type="primary">DES</name>
</gene>